<keyword id="KW-0963">Cytoplasm</keyword>
<keyword id="KW-0342">GTP-binding</keyword>
<keyword id="KW-0547">Nucleotide-binding</keyword>
<keyword id="KW-0648">Protein biosynthesis</keyword>
<evidence type="ECO:0000255" key="1">
    <source>
        <dbReference type="HAMAP-Rule" id="MF_00072"/>
    </source>
</evidence>
<sequence length="529" mass="59563">MTLSPYLQEVAKRRTFAIISHPDAGKTTITEKVLLFGQAIQTAGTVKGRGSSQHAKSDWMEMEKQRGISITTSVMQFPYHDCLVNLLDTPGHEDFSEDTYRTLTAVDCCLMVIDAAKGVEDRTRKLMEVTRLRDTPILTFMNKLDRDIRDPMELLDEVENELKIGCAPITWPIGCGKLFKGVYHLYKDETYLYQTGKGHTIQEVRIVKGLNNPDLDAAVGEDLAQQLRDELELVQGASNEFDEELFLAGEITPVFFGTALGNFGVDHMLDGLVAWAPAPMPRQTDTRTVEASEEKFTGFVFKIQANMDPKHRDRVAFMRVVSGKYEKGMKLRQVRTGKDVVISDALTFMAGDRSHVEEAYPGDILGLHNHGTIQIGDTFTQGEMMKFTGIPNFAPELFRRIRLKDPLKQKQLLKGLVQLSEEGAVQVFRPISNNDLIVGAVGVLQFDVVVARLKSEYNVEAIYESVNVATARWVESADAKKFEEFKRKNETQLALDGGDNLTYIAPTMVNLNLTQERYPDVQFRKTREH</sequence>
<feature type="chain" id="PRO_0000242206" description="Peptide chain release factor 3">
    <location>
        <begin position="1"/>
        <end position="529"/>
    </location>
</feature>
<feature type="domain" description="tr-type G">
    <location>
        <begin position="11"/>
        <end position="280"/>
    </location>
</feature>
<feature type="binding site" evidence="1">
    <location>
        <begin position="20"/>
        <end position="27"/>
    </location>
    <ligand>
        <name>GTP</name>
        <dbReference type="ChEBI" id="CHEBI:37565"/>
    </ligand>
</feature>
<feature type="binding site" evidence="1">
    <location>
        <begin position="88"/>
        <end position="92"/>
    </location>
    <ligand>
        <name>GTP</name>
        <dbReference type="ChEBI" id="CHEBI:37565"/>
    </ligand>
</feature>
<feature type="binding site" evidence="1">
    <location>
        <begin position="142"/>
        <end position="145"/>
    </location>
    <ligand>
        <name>GTP</name>
        <dbReference type="ChEBI" id="CHEBI:37565"/>
    </ligand>
</feature>
<gene>
    <name evidence="1" type="primary">prfC</name>
    <name type="ordered locus">SPA4374</name>
</gene>
<proteinExistence type="inferred from homology"/>
<protein>
    <recommendedName>
        <fullName evidence="1">Peptide chain release factor 3</fullName>
        <shortName evidence="1">RF-3</shortName>
    </recommendedName>
</protein>
<comment type="function">
    <text evidence="1">Increases the formation of ribosomal termination complexes and stimulates activities of RF-1 and RF-2. It binds guanine nucleotides and has strong preference for UGA stop codons. It may interact directly with the ribosome. The stimulation of RF-1 and RF-2 is significantly reduced by GTP and GDP, but not by GMP.</text>
</comment>
<comment type="subcellular location">
    <subcellularLocation>
        <location evidence="1">Cytoplasm</location>
    </subcellularLocation>
</comment>
<comment type="similarity">
    <text evidence="1">Belongs to the TRAFAC class translation factor GTPase superfamily. Classic translation factor GTPase family. PrfC subfamily.</text>
</comment>
<name>RF3_SALPA</name>
<dbReference type="EMBL" id="CP000026">
    <property type="protein sequence ID" value="AAV80097.1"/>
    <property type="molecule type" value="Genomic_DNA"/>
</dbReference>
<dbReference type="RefSeq" id="WP_000175965.1">
    <property type="nucleotide sequence ID" value="NC_006511.1"/>
</dbReference>
<dbReference type="SMR" id="Q5PK12"/>
<dbReference type="KEGG" id="spt:SPA4374"/>
<dbReference type="HOGENOM" id="CLU_002794_2_1_6"/>
<dbReference type="Proteomes" id="UP000008185">
    <property type="component" value="Chromosome"/>
</dbReference>
<dbReference type="GO" id="GO:0005829">
    <property type="term" value="C:cytosol"/>
    <property type="evidence" value="ECO:0007669"/>
    <property type="project" value="TreeGrafter"/>
</dbReference>
<dbReference type="GO" id="GO:0005525">
    <property type="term" value="F:GTP binding"/>
    <property type="evidence" value="ECO:0007669"/>
    <property type="project" value="UniProtKB-UniRule"/>
</dbReference>
<dbReference type="GO" id="GO:0003924">
    <property type="term" value="F:GTPase activity"/>
    <property type="evidence" value="ECO:0007669"/>
    <property type="project" value="InterPro"/>
</dbReference>
<dbReference type="GO" id="GO:0097216">
    <property type="term" value="F:guanosine tetraphosphate binding"/>
    <property type="evidence" value="ECO:0007669"/>
    <property type="project" value="UniProtKB-ARBA"/>
</dbReference>
<dbReference type="GO" id="GO:0016150">
    <property type="term" value="F:translation release factor activity, codon nonspecific"/>
    <property type="evidence" value="ECO:0007669"/>
    <property type="project" value="TreeGrafter"/>
</dbReference>
<dbReference type="GO" id="GO:0016149">
    <property type="term" value="F:translation release factor activity, codon specific"/>
    <property type="evidence" value="ECO:0007669"/>
    <property type="project" value="UniProtKB-UniRule"/>
</dbReference>
<dbReference type="GO" id="GO:0006449">
    <property type="term" value="P:regulation of translational termination"/>
    <property type="evidence" value="ECO:0007669"/>
    <property type="project" value="UniProtKB-UniRule"/>
</dbReference>
<dbReference type="CDD" id="cd04169">
    <property type="entry name" value="RF3"/>
    <property type="match status" value="1"/>
</dbReference>
<dbReference type="CDD" id="cd03689">
    <property type="entry name" value="RF3_II"/>
    <property type="match status" value="1"/>
</dbReference>
<dbReference type="CDD" id="cd16259">
    <property type="entry name" value="RF3_III"/>
    <property type="match status" value="1"/>
</dbReference>
<dbReference type="FunFam" id="2.40.30.10:FF:000040">
    <property type="entry name" value="Peptide chain release factor 3"/>
    <property type="match status" value="1"/>
</dbReference>
<dbReference type="FunFam" id="3.30.70.3280:FF:000001">
    <property type="entry name" value="Peptide chain release factor 3"/>
    <property type="match status" value="1"/>
</dbReference>
<dbReference type="FunFam" id="3.40.50.300:FF:000184">
    <property type="entry name" value="Peptide chain release factor 3"/>
    <property type="match status" value="1"/>
</dbReference>
<dbReference type="FunFam" id="3.40.50.300:FF:000253">
    <property type="entry name" value="Peptide chain release factor 3"/>
    <property type="match status" value="1"/>
</dbReference>
<dbReference type="Gene3D" id="3.40.50.300">
    <property type="entry name" value="P-loop containing nucleotide triphosphate hydrolases"/>
    <property type="match status" value="3"/>
</dbReference>
<dbReference type="Gene3D" id="3.30.70.3280">
    <property type="entry name" value="Peptide chain release factor 3, domain III"/>
    <property type="match status" value="1"/>
</dbReference>
<dbReference type="HAMAP" id="MF_00072">
    <property type="entry name" value="Rel_fac_3"/>
    <property type="match status" value="1"/>
</dbReference>
<dbReference type="InterPro" id="IPR053905">
    <property type="entry name" value="EF-G-like_DII"/>
</dbReference>
<dbReference type="InterPro" id="IPR035647">
    <property type="entry name" value="EFG_III/V"/>
</dbReference>
<dbReference type="InterPro" id="IPR031157">
    <property type="entry name" value="G_TR_CS"/>
</dbReference>
<dbReference type="InterPro" id="IPR027417">
    <property type="entry name" value="P-loop_NTPase"/>
</dbReference>
<dbReference type="InterPro" id="IPR004548">
    <property type="entry name" value="PrfC"/>
</dbReference>
<dbReference type="InterPro" id="IPR032090">
    <property type="entry name" value="RF3_C"/>
</dbReference>
<dbReference type="InterPro" id="IPR038467">
    <property type="entry name" value="RF3_dom_3_sf"/>
</dbReference>
<dbReference type="InterPro" id="IPR041732">
    <property type="entry name" value="RF3_GTP-bd"/>
</dbReference>
<dbReference type="InterPro" id="IPR005225">
    <property type="entry name" value="Small_GTP-bd"/>
</dbReference>
<dbReference type="InterPro" id="IPR000795">
    <property type="entry name" value="T_Tr_GTP-bd_dom"/>
</dbReference>
<dbReference type="InterPro" id="IPR009000">
    <property type="entry name" value="Transl_B-barrel_sf"/>
</dbReference>
<dbReference type="NCBIfam" id="TIGR00503">
    <property type="entry name" value="prfC"/>
    <property type="match status" value="1"/>
</dbReference>
<dbReference type="NCBIfam" id="NF001964">
    <property type="entry name" value="PRK00741.1"/>
    <property type="match status" value="1"/>
</dbReference>
<dbReference type="NCBIfam" id="TIGR00231">
    <property type="entry name" value="small_GTP"/>
    <property type="match status" value="1"/>
</dbReference>
<dbReference type="PANTHER" id="PTHR43556">
    <property type="entry name" value="PEPTIDE CHAIN RELEASE FACTOR RF3"/>
    <property type="match status" value="1"/>
</dbReference>
<dbReference type="PANTHER" id="PTHR43556:SF2">
    <property type="entry name" value="PEPTIDE CHAIN RELEASE FACTOR RF3"/>
    <property type="match status" value="1"/>
</dbReference>
<dbReference type="Pfam" id="PF22042">
    <property type="entry name" value="EF-G_D2"/>
    <property type="match status" value="1"/>
</dbReference>
<dbReference type="Pfam" id="PF00009">
    <property type="entry name" value="GTP_EFTU"/>
    <property type="match status" value="1"/>
</dbReference>
<dbReference type="Pfam" id="PF16658">
    <property type="entry name" value="RF3_C"/>
    <property type="match status" value="1"/>
</dbReference>
<dbReference type="PRINTS" id="PR00315">
    <property type="entry name" value="ELONGATNFCT"/>
</dbReference>
<dbReference type="SUPFAM" id="SSF54980">
    <property type="entry name" value="EF-G C-terminal domain-like"/>
    <property type="match status" value="1"/>
</dbReference>
<dbReference type="SUPFAM" id="SSF52540">
    <property type="entry name" value="P-loop containing nucleoside triphosphate hydrolases"/>
    <property type="match status" value="1"/>
</dbReference>
<dbReference type="SUPFAM" id="SSF50447">
    <property type="entry name" value="Translation proteins"/>
    <property type="match status" value="1"/>
</dbReference>
<dbReference type="PROSITE" id="PS00301">
    <property type="entry name" value="G_TR_1"/>
    <property type="match status" value="1"/>
</dbReference>
<dbReference type="PROSITE" id="PS51722">
    <property type="entry name" value="G_TR_2"/>
    <property type="match status" value="1"/>
</dbReference>
<organism>
    <name type="scientific">Salmonella paratyphi A (strain ATCC 9150 / SARB42)</name>
    <dbReference type="NCBI Taxonomy" id="295319"/>
    <lineage>
        <taxon>Bacteria</taxon>
        <taxon>Pseudomonadati</taxon>
        <taxon>Pseudomonadota</taxon>
        <taxon>Gammaproteobacteria</taxon>
        <taxon>Enterobacterales</taxon>
        <taxon>Enterobacteriaceae</taxon>
        <taxon>Salmonella</taxon>
    </lineage>
</organism>
<accession>Q5PK12</accession>
<reference key="1">
    <citation type="journal article" date="2004" name="Nat. Genet.">
        <title>Comparison of genome degradation in Paratyphi A and Typhi, human-restricted serovars of Salmonella enterica that cause typhoid.</title>
        <authorList>
            <person name="McClelland M."/>
            <person name="Sanderson K.E."/>
            <person name="Clifton S.W."/>
            <person name="Latreille P."/>
            <person name="Porwollik S."/>
            <person name="Sabo A."/>
            <person name="Meyer R."/>
            <person name="Bieri T."/>
            <person name="Ozersky P."/>
            <person name="McLellan M."/>
            <person name="Harkins C.R."/>
            <person name="Wang C."/>
            <person name="Nguyen C."/>
            <person name="Berghoff A."/>
            <person name="Elliott G."/>
            <person name="Kohlberg S."/>
            <person name="Strong C."/>
            <person name="Du F."/>
            <person name="Carter J."/>
            <person name="Kremizki C."/>
            <person name="Layman D."/>
            <person name="Leonard S."/>
            <person name="Sun H."/>
            <person name="Fulton L."/>
            <person name="Nash W."/>
            <person name="Miner T."/>
            <person name="Minx P."/>
            <person name="Delehaunty K."/>
            <person name="Fronick C."/>
            <person name="Magrini V."/>
            <person name="Nhan M."/>
            <person name="Warren W."/>
            <person name="Florea L."/>
            <person name="Spieth J."/>
            <person name="Wilson R.K."/>
        </authorList>
    </citation>
    <scope>NUCLEOTIDE SEQUENCE [LARGE SCALE GENOMIC DNA]</scope>
    <source>
        <strain>ATCC 9150 / SARB42</strain>
    </source>
</reference>